<gene>
    <name type="primary">GGCX</name>
</gene>
<dbReference type="EC" id="4.1.1.90" evidence="3"/>
<dbReference type="EMBL" id="CR857311">
    <property type="protein sequence ID" value="CAH89607.1"/>
    <property type="molecule type" value="mRNA"/>
</dbReference>
<dbReference type="RefSeq" id="NP_001124716.1">
    <property type="nucleotide sequence ID" value="NM_001131244.2"/>
</dbReference>
<dbReference type="SMR" id="Q5RF50"/>
<dbReference type="FunCoup" id="Q5RF50">
    <property type="interactions" value="927"/>
</dbReference>
<dbReference type="STRING" id="9601.ENSPPYP00000013637"/>
<dbReference type="GeneID" id="100171564"/>
<dbReference type="KEGG" id="pon:100171564"/>
<dbReference type="CTD" id="2677"/>
<dbReference type="eggNOG" id="ENOG502QRU2">
    <property type="taxonomic scope" value="Eukaryota"/>
</dbReference>
<dbReference type="InParanoid" id="Q5RF50"/>
<dbReference type="OrthoDB" id="206689at2759"/>
<dbReference type="Proteomes" id="UP000001595">
    <property type="component" value="Unplaced"/>
</dbReference>
<dbReference type="GO" id="GO:0005789">
    <property type="term" value="C:endoplasmic reticulum membrane"/>
    <property type="evidence" value="ECO:0007669"/>
    <property type="project" value="UniProtKB-SubCell"/>
</dbReference>
<dbReference type="GO" id="GO:0008488">
    <property type="term" value="F:gamma-glutamyl carboxylase activity"/>
    <property type="evidence" value="ECO:0007669"/>
    <property type="project" value="UniProtKB-EC"/>
</dbReference>
<dbReference type="GO" id="GO:0019842">
    <property type="term" value="F:vitamin binding"/>
    <property type="evidence" value="ECO:0007669"/>
    <property type="project" value="TreeGrafter"/>
</dbReference>
<dbReference type="Gene3D" id="2.60.120.10">
    <property type="entry name" value="Jelly Rolls"/>
    <property type="match status" value="1"/>
</dbReference>
<dbReference type="InterPro" id="IPR011020">
    <property type="entry name" value="HTTM-like"/>
</dbReference>
<dbReference type="InterPro" id="IPR053934">
    <property type="entry name" value="HTTM_dom"/>
</dbReference>
<dbReference type="InterPro" id="IPR014710">
    <property type="entry name" value="RmlC-like_jellyroll"/>
</dbReference>
<dbReference type="InterPro" id="IPR011051">
    <property type="entry name" value="RmlC_Cupin_sf"/>
</dbReference>
<dbReference type="InterPro" id="IPR007782">
    <property type="entry name" value="VKG_COase"/>
</dbReference>
<dbReference type="InterPro" id="IPR053935">
    <property type="entry name" value="VKGC_lumenal_dom"/>
</dbReference>
<dbReference type="PANTHER" id="PTHR12639">
    <property type="entry name" value="VITAMIN K-DEPENDENT GAMMA-CARBOXYLASE"/>
    <property type="match status" value="1"/>
</dbReference>
<dbReference type="PANTHER" id="PTHR12639:SF6">
    <property type="entry name" value="VITAMIN K-DEPENDENT GAMMA-CARBOXYLASE"/>
    <property type="match status" value="1"/>
</dbReference>
<dbReference type="Pfam" id="PF05090">
    <property type="entry name" value="HTTM"/>
    <property type="match status" value="1"/>
</dbReference>
<dbReference type="Pfam" id="PF22777">
    <property type="entry name" value="VKGC_lumenal_dom"/>
    <property type="match status" value="1"/>
</dbReference>
<dbReference type="SMART" id="SM00752">
    <property type="entry name" value="HTTM"/>
    <property type="match status" value="1"/>
</dbReference>
<dbReference type="SUPFAM" id="SSF51182">
    <property type="entry name" value="RmlC-like cupins"/>
    <property type="match status" value="1"/>
</dbReference>
<organism>
    <name type="scientific">Pongo abelii</name>
    <name type="common">Sumatran orangutan</name>
    <name type="synonym">Pongo pygmaeus abelii</name>
    <dbReference type="NCBI Taxonomy" id="9601"/>
    <lineage>
        <taxon>Eukaryota</taxon>
        <taxon>Metazoa</taxon>
        <taxon>Chordata</taxon>
        <taxon>Craniata</taxon>
        <taxon>Vertebrata</taxon>
        <taxon>Euteleostomi</taxon>
        <taxon>Mammalia</taxon>
        <taxon>Eutheria</taxon>
        <taxon>Euarchontoglires</taxon>
        <taxon>Primates</taxon>
        <taxon>Haplorrhini</taxon>
        <taxon>Catarrhini</taxon>
        <taxon>Hominidae</taxon>
        <taxon>Pongo</taxon>
    </lineage>
</organism>
<name>VKGC_PONAB</name>
<reference key="1">
    <citation type="submission" date="2004-11" db="EMBL/GenBank/DDBJ databases">
        <authorList>
            <consortium name="The German cDNA consortium"/>
        </authorList>
    </citation>
    <scope>NUCLEOTIDE SEQUENCE [LARGE SCALE MRNA]</scope>
    <source>
        <tissue>Kidney</tissue>
    </source>
</reference>
<comment type="function">
    <text evidence="3">Mediates the vitamin K-dependent carboxylation of glutamate residues to calcium-binding gamma-carboxyglutamate (Gla) residues with the concomitant conversion of the reduced hydroquinone form of vitamin K to vitamin K epoxide. Catalyzes gamma-carboxylation of various proteins, such as blood coagulation factors (F2, F7, F9 and F10), osteocalcin (BGLAP) or matrix Gla protein (MGP).</text>
</comment>
<comment type="catalytic activity">
    <reaction evidence="3">
        <text>4-carboxy-L-glutamyl-[protein] + 2,3-epoxyphylloquinone + H2O + H(+) = phylloquinol + L-glutamyl-[protein] + CO2 + O2</text>
        <dbReference type="Rhea" id="RHEA:45140"/>
        <dbReference type="Rhea" id="RHEA-COMP:10208"/>
        <dbReference type="Rhea" id="RHEA-COMP:11094"/>
        <dbReference type="ChEBI" id="CHEBI:15377"/>
        <dbReference type="ChEBI" id="CHEBI:15378"/>
        <dbReference type="ChEBI" id="CHEBI:15379"/>
        <dbReference type="ChEBI" id="CHEBI:15759"/>
        <dbReference type="ChEBI" id="CHEBI:16526"/>
        <dbReference type="ChEBI" id="CHEBI:28433"/>
        <dbReference type="ChEBI" id="CHEBI:29973"/>
        <dbReference type="ChEBI" id="CHEBI:84990"/>
        <dbReference type="EC" id="4.1.1.90"/>
    </reaction>
    <physiologicalReaction direction="right-to-left" evidence="3">
        <dbReference type="Rhea" id="RHEA:45142"/>
    </physiologicalReaction>
</comment>
<comment type="subunit">
    <text evidence="2 3">Monomer (By similarity). May interact with CALU (By similarity).</text>
</comment>
<comment type="subcellular location">
    <subcellularLocation>
        <location evidence="3">Endoplasmic reticulum membrane</location>
        <topology evidence="3">Multi-pass membrane protein</topology>
    </subcellularLocation>
</comment>
<comment type="miscellaneous">
    <text>The vitamin K-dependent protein substrates of carboxylase have usually a propeptide that binds to a high-affinity site on the carboxylase. CO(2), O(2) and reduced vitamin K are cosubstrates.</text>
</comment>
<comment type="similarity">
    <text evidence="6">Belongs to the vitamin K-dependent gamma-carboxylase family.</text>
</comment>
<proteinExistence type="evidence at transcript level"/>
<sequence>MAVSARSARTSPGSDKVQKDKAELISGPRQDSLMGKLLGFEWTDLSSWRRLVTLLNRPTDPASLAVFRFLFGFLMVLDIPQERGLSSLDRKYLDGLDVCRFPLLDALRPLPLDWMYLVYTIMFLGALGMMLGLCYRISCVLFLLPYWYVFLLDKTSWNNHSYLYGLLAFQLTFMDANHYWSVDGLLNARRRNAHVPLWNYAVLRGQIFIVYFIAGVKKLDADWVEGYSMEYLSRHWLFSPFKLLLSEELTSLLVVHWGGLLLDLSAGFLLFFDASRSIGLFFVSYFHCMNSQLFSIGMFSYVMLASSPLFCSPEWPRKLVSYCPQRLQELLPLKAAPQPSVSCVYKRSRGKSGQKPGLRHQLGAAFTLLYLLEQLFLPYSHFLTQGYNNWTNGLYGYSWDMMVHSRSHQHVKITYRDGRTGELGYLNPGVFTQSRRWKDHADMLKQYATCLSRLLPKYNVTEPQIYFDIWVSINDRFQQRIFDPRVDIVQAAWSPFQRTSWVQPLLMDLSPWRAKLQEIKSSLDNHTEVVFIADFPGLHLENFVSEDLGNTSIQLLQGEVTVELVAEQKNQTLREGEKMQLPAGEYHKVYTTSPSPSCYMYVYVNTTELALEQDLAYLQELKEKVENGSETGPLPPELQPLLEGEVKGGPEPTPLVQTFLRRQQRLQEIERRRNTPFHERFFRFLLRKLYVFRRSFLMTCISLRNLILGRPSLEQLAQEVTYANLRPFEQVGELSPSNMDSSHSNPPESNPDPVHSEF</sequence>
<keyword id="KW-0007">Acetylation</keyword>
<keyword id="KW-1015">Disulfide bond</keyword>
<keyword id="KW-0256">Endoplasmic reticulum</keyword>
<keyword id="KW-0456">Lyase</keyword>
<keyword id="KW-0472">Membrane</keyword>
<keyword id="KW-1185">Reference proteome</keyword>
<keyword id="KW-0812">Transmembrane</keyword>
<keyword id="KW-1133">Transmembrane helix</keyword>
<feature type="initiator methionine" description="Removed" evidence="3">
    <location>
        <position position="1"/>
    </location>
</feature>
<feature type="chain" id="PRO_0000191825" description="Vitamin K-dependent gamma-carboxylase">
    <location>
        <begin position="2"/>
        <end position="758"/>
    </location>
</feature>
<feature type="topological domain" description="Cytoplasmic" evidence="4">
    <location>
        <begin position="2"/>
        <end position="60"/>
    </location>
</feature>
<feature type="transmembrane region" description="Helical" evidence="4">
    <location>
        <begin position="61"/>
        <end position="81"/>
    </location>
</feature>
<feature type="topological domain" description="Lumenal" evidence="4">
    <location>
        <begin position="82"/>
        <end position="113"/>
    </location>
</feature>
<feature type="transmembrane region" description="Helical" evidence="4">
    <location>
        <begin position="114"/>
        <end position="134"/>
    </location>
</feature>
<feature type="topological domain" description="Cytoplasmic" evidence="4">
    <location>
        <begin position="135"/>
        <end position="136"/>
    </location>
</feature>
<feature type="transmembrane region" description="Helical" evidence="4">
    <location>
        <begin position="137"/>
        <end position="157"/>
    </location>
</feature>
<feature type="topological domain" description="Lumenal" evidence="4">
    <location>
        <begin position="158"/>
        <end position="292"/>
    </location>
</feature>
<feature type="transmembrane region" description="Helical" evidence="4">
    <location>
        <begin position="293"/>
        <end position="313"/>
    </location>
</feature>
<feature type="topological domain" description="Cytoplasmic" evidence="4">
    <location>
        <begin position="314"/>
        <end position="361"/>
    </location>
</feature>
<feature type="transmembrane region" description="Helical" evidence="4">
    <location>
        <begin position="362"/>
        <end position="382"/>
    </location>
</feature>
<feature type="topological domain" description="Lumenal" evidence="4">
    <location>
        <begin position="383"/>
        <end position="758"/>
    </location>
</feature>
<feature type="region of interest" description="Disordered" evidence="5">
    <location>
        <begin position="1"/>
        <end position="21"/>
    </location>
</feature>
<feature type="region of interest" description="Disordered" evidence="5">
    <location>
        <begin position="732"/>
        <end position="758"/>
    </location>
</feature>
<feature type="compositionally biased region" description="Polar residues" evidence="5">
    <location>
        <begin position="735"/>
        <end position="747"/>
    </location>
</feature>
<feature type="modified residue" description="N-acetylalanine" evidence="3">
    <location>
        <position position="2"/>
    </location>
</feature>
<feature type="disulfide bond" evidence="1">
    <location>
        <begin position="99"/>
        <end position="450"/>
    </location>
</feature>
<accession>Q5RF50</accession>
<protein>
    <recommendedName>
        <fullName>Vitamin K-dependent gamma-carboxylase</fullName>
        <ecNumber evidence="3">4.1.1.90</ecNumber>
    </recommendedName>
    <alternativeName>
        <fullName>Gamma-glutamyl carboxylase</fullName>
    </alternativeName>
    <alternativeName>
        <fullName>Peptidyl-glutamate 4-carboxylase</fullName>
    </alternativeName>
    <alternativeName>
        <fullName>Vitamin K gamma glutamyl carboxylase</fullName>
    </alternativeName>
</protein>
<evidence type="ECO:0000250" key="1"/>
<evidence type="ECO:0000250" key="2">
    <source>
        <dbReference type="UniProtKB" id="O88496"/>
    </source>
</evidence>
<evidence type="ECO:0000250" key="3">
    <source>
        <dbReference type="UniProtKB" id="P38435"/>
    </source>
</evidence>
<evidence type="ECO:0000255" key="4"/>
<evidence type="ECO:0000256" key="5">
    <source>
        <dbReference type="SAM" id="MobiDB-lite"/>
    </source>
</evidence>
<evidence type="ECO:0000305" key="6"/>